<reference key="1">
    <citation type="journal article" date="2009" name="J. Bacteriol.">
        <title>Complete genome sequence of Macrococcus caseolyticus strain JCSCS5402, reflecting the ancestral genome of the human-pathogenic staphylococci.</title>
        <authorList>
            <person name="Baba T."/>
            <person name="Kuwahara-Arai K."/>
            <person name="Uchiyama I."/>
            <person name="Takeuchi F."/>
            <person name="Ito T."/>
            <person name="Hiramatsu K."/>
        </authorList>
    </citation>
    <scope>NUCLEOTIDE SEQUENCE [LARGE SCALE GENOMIC DNA]</scope>
    <source>
        <strain>JCSC5402</strain>
    </source>
</reference>
<feature type="chain" id="PRO_1000200738" description="Peptide deformylase">
    <location>
        <begin position="1"/>
        <end position="184"/>
    </location>
</feature>
<feature type="active site" evidence="1">
    <location>
        <position position="155"/>
    </location>
</feature>
<feature type="binding site" evidence="1">
    <location>
        <position position="111"/>
    </location>
    <ligand>
        <name>Fe cation</name>
        <dbReference type="ChEBI" id="CHEBI:24875"/>
    </ligand>
</feature>
<feature type="binding site" evidence="1">
    <location>
        <position position="154"/>
    </location>
    <ligand>
        <name>Fe cation</name>
        <dbReference type="ChEBI" id="CHEBI:24875"/>
    </ligand>
</feature>
<feature type="binding site" evidence="1">
    <location>
        <position position="158"/>
    </location>
    <ligand>
        <name>Fe cation</name>
        <dbReference type="ChEBI" id="CHEBI:24875"/>
    </ligand>
</feature>
<gene>
    <name evidence="1" type="primary">def</name>
    <name type="ordered locus">MCCL_0708</name>
</gene>
<accession>B9EB04</accession>
<protein>
    <recommendedName>
        <fullName evidence="1">Peptide deformylase</fullName>
        <shortName evidence="1">PDF</shortName>
        <ecNumber evidence="1">3.5.1.88</ecNumber>
    </recommendedName>
    <alternativeName>
        <fullName evidence="1">Polypeptide deformylase</fullName>
    </alternativeName>
</protein>
<dbReference type="EC" id="3.5.1.88" evidence="1"/>
<dbReference type="EMBL" id="AP009484">
    <property type="protein sequence ID" value="BAH17415.1"/>
    <property type="molecule type" value="Genomic_DNA"/>
</dbReference>
<dbReference type="RefSeq" id="WP_012656616.1">
    <property type="nucleotide sequence ID" value="NC_011999.1"/>
</dbReference>
<dbReference type="SMR" id="B9EB04"/>
<dbReference type="STRING" id="458233.MCCL_0708"/>
<dbReference type="KEGG" id="mcl:MCCL_0708"/>
<dbReference type="eggNOG" id="COG0242">
    <property type="taxonomic scope" value="Bacteria"/>
</dbReference>
<dbReference type="HOGENOM" id="CLU_061901_4_0_9"/>
<dbReference type="OrthoDB" id="9784988at2"/>
<dbReference type="Proteomes" id="UP000001383">
    <property type="component" value="Chromosome"/>
</dbReference>
<dbReference type="GO" id="GO:0046872">
    <property type="term" value="F:metal ion binding"/>
    <property type="evidence" value="ECO:0007669"/>
    <property type="project" value="UniProtKB-KW"/>
</dbReference>
<dbReference type="GO" id="GO:0042586">
    <property type="term" value="F:peptide deformylase activity"/>
    <property type="evidence" value="ECO:0007669"/>
    <property type="project" value="UniProtKB-UniRule"/>
</dbReference>
<dbReference type="GO" id="GO:0043686">
    <property type="term" value="P:co-translational protein modification"/>
    <property type="evidence" value="ECO:0007669"/>
    <property type="project" value="TreeGrafter"/>
</dbReference>
<dbReference type="GO" id="GO:0006412">
    <property type="term" value="P:translation"/>
    <property type="evidence" value="ECO:0007669"/>
    <property type="project" value="UniProtKB-UniRule"/>
</dbReference>
<dbReference type="CDD" id="cd00487">
    <property type="entry name" value="Pep_deformylase"/>
    <property type="match status" value="1"/>
</dbReference>
<dbReference type="FunFam" id="3.90.45.10:FF:000002">
    <property type="entry name" value="Peptide deformylase"/>
    <property type="match status" value="1"/>
</dbReference>
<dbReference type="Gene3D" id="3.90.45.10">
    <property type="entry name" value="Peptide deformylase"/>
    <property type="match status" value="1"/>
</dbReference>
<dbReference type="HAMAP" id="MF_00163">
    <property type="entry name" value="Pep_deformylase"/>
    <property type="match status" value="1"/>
</dbReference>
<dbReference type="InterPro" id="IPR023635">
    <property type="entry name" value="Peptide_deformylase"/>
</dbReference>
<dbReference type="InterPro" id="IPR036821">
    <property type="entry name" value="Peptide_deformylase_sf"/>
</dbReference>
<dbReference type="NCBIfam" id="TIGR00079">
    <property type="entry name" value="pept_deformyl"/>
    <property type="match status" value="1"/>
</dbReference>
<dbReference type="PANTHER" id="PTHR10458">
    <property type="entry name" value="PEPTIDE DEFORMYLASE"/>
    <property type="match status" value="1"/>
</dbReference>
<dbReference type="PANTHER" id="PTHR10458:SF8">
    <property type="entry name" value="PEPTIDE DEFORMYLASE 2"/>
    <property type="match status" value="1"/>
</dbReference>
<dbReference type="Pfam" id="PF01327">
    <property type="entry name" value="Pep_deformylase"/>
    <property type="match status" value="1"/>
</dbReference>
<dbReference type="PIRSF" id="PIRSF004749">
    <property type="entry name" value="Pep_def"/>
    <property type="match status" value="1"/>
</dbReference>
<dbReference type="PRINTS" id="PR01576">
    <property type="entry name" value="PDEFORMYLASE"/>
</dbReference>
<dbReference type="SUPFAM" id="SSF56420">
    <property type="entry name" value="Peptide deformylase"/>
    <property type="match status" value="1"/>
</dbReference>
<sequence length="184" mass="20992">MLTMKDIIRDGHPTLRAKAEEVPLPLSTEDRQLIDDMLEFLKMSQDEEQSRKYQLRSGVGIAAPQLNHKKRMLVIHFYDEKKGDYVTHQLINPKIISHSVEKSYLPTGEGCLSVDEAVPGIVHRYARITVKAYTPDGEEVKLRLKDFSAIVAQHEIDHLNGVMFYDHIDKADPMKVQKDAIAVE</sequence>
<evidence type="ECO:0000255" key="1">
    <source>
        <dbReference type="HAMAP-Rule" id="MF_00163"/>
    </source>
</evidence>
<name>DEF_MACCJ</name>
<keyword id="KW-0378">Hydrolase</keyword>
<keyword id="KW-0408">Iron</keyword>
<keyword id="KW-0479">Metal-binding</keyword>
<keyword id="KW-0648">Protein biosynthesis</keyword>
<keyword id="KW-1185">Reference proteome</keyword>
<proteinExistence type="inferred from homology"/>
<comment type="function">
    <text evidence="1">Removes the formyl group from the N-terminal Met of newly synthesized proteins. Requires at least a dipeptide for an efficient rate of reaction. N-terminal L-methionine is a prerequisite for activity but the enzyme has broad specificity at other positions.</text>
</comment>
<comment type="catalytic activity">
    <reaction evidence="1">
        <text>N-terminal N-formyl-L-methionyl-[peptide] + H2O = N-terminal L-methionyl-[peptide] + formate</text>
        <dbReference type="Rhea" id="RHEA:24420"/>
        <dbReference type="Rhea" id="RHEA-COMP:10639"/>
        <dbReference type="Rhea" id="RHEA-COMP:10640"/>
        <dbReference type="ChEBI" id="CHEBI:15377"/>
        <dbReference type="ChEBI" id="CHEBI:15740"/>
        <dbReference type="ChEBI" id="CHEBI:49298"/>
        <dbReference type="ChEBI" id="CHEBI:64731"/>
        <dbReference type="EC" id="3.5.1.88"/>
    </reaction>
</comment>
<comment type="cofactor">
    <cofactor evidence="1">
        <name>Fe(2+)</name>
        <dbReference type="ChEBI" id="CHEBI:29033"/>
    </cofactor>
    <text evidence="1">Binds 1 Fe(2+) ion.</text>
</comment>
<comment type="similarity">
    <text evidence="1">Belongs to the polypeptide deformylase family.</text>
</comment>
<organism>
    <name type="scientific">Macrococcus caseolyticus (strain JCSC5402)</name>
    <name type="common">Macrococcoides caseolyticum</name>
    <dbReference type="NCBI Taxonomy" id="458233"/>
    <lineage>
        <taxon>Bacteria</taxon>
        <taxon>Bacillati</taxon>
        <taxon>Bacillota</taxon>
        <taxon>Bacilli</taxon>
        <taxon>Bacillales</taxon>
        <taxon>Staphylococcaceae</taxon>
        <taxon>Macrococcoides</taxon>
    </lineage>
</organism>